<gene>
    <name type="primary">Ston2</name>
    <name type="synonym">Stn2</name>
    <name type="synonym">Stnb</name>
</gene>
<accession>Q8BZ60</accession>
<accession>A2RTJ7</accession>
<name>STON2_MOUSE</name>
<protein>
    <recommendedName>
        <fullName>Stonin-2</fullName>
    </recommendedName>
    <alternativeName>
        <fullName>Stoned B</fullName>
    </alternativeName>
</protein>
<reference key="1">
    <citation type="journal article" date="2005" name="Science">
        <title>The transcriptional landscape of the mammalian genome.</title>
        <authorList>
            <person name="Carninci P."/>
            <person name="Kasukawa T."/>
            <person name="Katayama S."/>
            <person name="Gough J."/>
            <person name="Frith M.C."/>
            <person name="Maeda N."/>
            <person name="Oyama R."/>
            <person name="Ravasi T."/>
            <person name="Lenhard B."/>
            <person name="Wells C."/>
            <person name="Kodzius R."/>
            <person name="Shimokawa K."/>
            <person name="Bajic V.B."/>
            <person name="Brenner S.E."/>
            <person name="Batalov S."/>
            <person name="Forrest A.R."/>
            <person name="Zavolan M."/>
            <person name="Davis M.J."/>
            <person name="Wilming L.G."/>
            <person name="Aidinis V."/>
            <person name="Allen J.E."/>
            <person name="Ambesi-Impiombato A."/>
            <person name="Apweiler R."/>
            <person name="Aturaliya R.N."/>
            <person name="Bailey T.L."/>
            <person name="Bansal M."/>
            <person name="Baxter L."/>
            <person name="Beisel K.W."/>
            <person name="Bersano T."/>
            <person name="Bono H."/>
            <person name="Chalk A.M."/>
            <person name="Chiu K.P."/>
            <person name="Choudhary V."/>
            <person name="Christoffels A."/>
            <person name="Clutterbuck D.R."/>
            <person name="Crowe M.L."/>
            <person name="Dalla E."/>
            <person name="Dalrymple B.P."/>
            <person name="de Bono B."/>
            <person name="Della Gatta G."/>
            <person name="di Bernardo D."/>
            <person name="Down T."/>
            <person name="Engstrom P."/>
            <person name="Fagiolini M."/>
            <person name="Faulkner G."/>
            <person name="Fletcher C.F."/>
            <person name="Fukushima T."/>
            <person name="Furuno M."/>
            <person name="Futaki S."/>
            <person name="Gariboldi M."/>
            <person name="Georgii-Hemming P."/>
            <person name="Gingeras T.R."/>
            <person name="Gojobori T."/>
            <person name="Green R.E."/>
            <person name="Gustincich S."/>
            <person name="Harbers M."/>
            <person name="Hayashi Y."/>
            <person name="Hensch T.K."/>
            <person name="Hirokawa N."/>
            <person name="Hill D."/>
            <person name="Huminiecki L."/>
            <person name="Iacono M."/>
            <person name="Ikeo K."/>
            <person name="Iwama A."/>
            <person name="Ishikawa T."/>
            <person name="Jakt M."/>
            <person name="Kanapin A."/>
            <person name="Katoh M."/>
            <person name="Kawasawa Y."/>
            <person name="Kelso J."/>
            <person name="Kitamura H."/>
            <person name="Kitano H."/>
            <person name="Kollias G."/>
            <person name="Krishnan S.P."/>
            <person name="Kruger A."/>
            <person name="Kummerfeld S.K."/>
            <person name="Kurochkin I.V."/>
            <person name="Lareau L.F."/>
            <person name="Lazarevic D."/>
            <person name="Lipovich L."/>
            <person name="Liu J."/>
            <person name="Liuni S."/>
            <person name="McWilliam S."/>
            <person name="Madan Babu M."/>
            <person name="Madera M."/>
            <person name="Marchionni L."/>
            <person name="Matsuda H."/>
            <person name="Matsuzawa S."/>
            <person name="Miki H."/>
            <person name="Mignone F."/>
            <person name="Miyake S."/>
            <person name="Morris K."/>
            <person name="Mottagui-Tabar S."/>
            <person name="Mulder N."/>
            <person name="Nakano N."/>
            <person name="Nakauchi H."/>
            <person name="Ng P."/>
            <person name="Nilsson R."/>
            <person name="Nishiguchi S."/>
            <person name="Nishikawa S."/>
            <person name="Nori F."/>
            <person name="Ohara O."/>
            <person name="Okazaki Y."/>
            <person name="Orlando V."/>
            <person name="Pang K.C."/>
            <person name="Pavan W.J."/>
            <person name="Pavesi G."/>
            <person name="Pesole G."/>
            <person name="Petrovsky N."/>
            <person name="Piazza S."/>
            <person name="Reed J."/>
            <person name="Reid J.F."/>
            <person name="Ring B.Z."/>
            <person name="Ringwald M."/>
            <person name="Rost B."/>
            <person name="Ruan Y."/>
            <person name="Salzberg S.L."/>
            <person name="Sandelin A."/>
            <person name="Schneider C."/>
            <person name="Schoenbach C."/>
            <person name="Sekiguchi K."/>
            <person name="Semple C.A."/>
            <person name="Seno S."/>
            <person name="Sessa L."/>
            <person name="Sheng Y."/>
            <person name="Shibata Y."/>
            <person name="Shimada H."/>
            <person name="Shimada K."/>
            <person name="Silva D."/>
            <person name="Sinclair B."/>
            <person name="Sperling S."/>
            <person name="Stupka E."/>
            <person name="Sugiura K."/>
            <person name="Sultana R."/>
            <person name="Takenaka Y."/>
            <person name="Taki K."/>
            <person name="Tammoja K."/>
            <person name="Tan S.L."/>
            <person name="Tang S."/>
            <person name="Taylor M.S."/>
            <person name="Tegner J."/>
            <person name="Teichmann S.A."/>
            <person name="Ueda H.R."/>
            <person name="van Nimwegen E."/>
            <person name="Verardo R."/>
            <person name="Wei C.L."/>
            <person name="Yagi K."/>
            <person name="Yamanishi H."/>
            <person name="Zabarovsky E."/>
            <person name="Zhu S."/>
            <person name="Zimmer A."/>
            <person name="Hide W."/>
            <person name="Bult C."/>
            <person name="Grimmond S.M."/>
            <person name="Teasdale R.D."/>
            <person name="Liu E.T."/>
            <person name="Brusic V."/>
            <person name="Quackenbush J."/>
            <person name="Wahlestedt C."/>
            <person name="Mattick J.S."/>
            <person name="Hume D.A."/>
            <person name="Kai C."/>
            <person name="Sasaki D."/>
            <person name="Tomaru Y."/>
            <person name="Fukuda S."/>
            <person name="Kanamori-Katayama M."/>
            <person name="Suzuki M."/>
            <person name="Aoki J."/>
            <person name="Arakawa T."/>
            <person name="Iida J."/>
            <person name="Imamura K."/>
            <person name="Itoh M."/>
            <person name="Kato T."/>
            <person name="Kawaji H."/>
            <person name="Kawagashira N."/>
            <person name="Kawashima T."/>
            <person name="Kojima M."/>
            <person name="Kondo S."/>
            <person name="Konno H."/>
            <person name="Nakano K."/>
            <person name="Ninomiya N."/>
            <person name="Nishio T."/>
            <person name="Okada M."/>
            <person name="Plessy C."/>
            <person name="Shibata K."/>
            <person name="Shiraki T."/>
            <person name="Suzuki S."/>
            <person name="Tagami M."/>
            <person name="Waki K."/>
            <person name="Watahiki A."/>
            <person name="Okamura-Oho Y."/>
            <person name="Suzuki H."/>
            <person name="Kawai J."/>
            <person name="Hayashizaki Y."/>
        </authorList>
    </citation>
    <scope>NUCLEOTIDE SEQUENCE [LARGE SCALE MRNA]</scope>
    <source>
        <strain>C57BL/6J</strain>
        <tissue>Bone</tissue>
    </source>
</reference>
<reference key="2">
    <citation type="journal article" date="2004" name="Genome Res.">
        <title>The status, quality, and expansion of the NIH full-length cDNA project: the Mammalian Gene Collection (MGC).</title>
        <authorList>
            <consortium name="The MGC Project Team"/>
        </authorList>
    </citation>
    <scope>NUCLEOTIDE SEQUENCE [LARGE SCALE MRNA]</scope>
    <source>
        <tissue>Brain</tissue>
    </source>
</reference>
<reference key="3">
    <citation type="journal article" date="2010" name="Cell">
        <title>A tissue-specific atlas of mouse protein phosphorylation and expression.</title>
        <authorList>
            <person name="Huttlin E.L."/>
            <person name="Jedrychowski M.P."/>
            <person name="Elias J.E."/>
            <person name="Goswami T."/>
            <person name="Rad R."/>
            <person name="Beausoleil S.A."/>
            <person name="Villen J."/>
            <person name="Haas W."/>
            <person name="Sowa M.E."/>
            <person name="Gygi S.P."/>
        </authorList>
    </citation>
    <scope>PHOSPHORYLATION [LARGE SCALE ANALYSIS] AT THR-253 AND SER-759</scope>
    <scope>IDENTIFICATION BY MASS SPECTROMETRY [LARGE SCALE ANALYSIS]</scope>
    <source>
        <tissue>Kidney</tissue>
        <tissue>Lung</tissue>
    </source>
</reference>
<feature type="chain" id="PRO_0000185733" description="Stonin-2">
    <location>
        <begin position="1"/>
        <end position="895"/>
    </location>
</feature>
<feature type="domain" description="SHD" evidence="3">
    <location>
        <begin position="424"/>
        <end position="557"/>
    </location>
</feature>
<feature type="domain" description="MHD" evidence="4">
    <location>
        <begin position="565"/>
        <end position="872"/>
    </location>
</feature>
<feature type="region of interest" description="Disordered" evidence="5">
    <location>
        <begin position="15"/>
        <end position="119"/>
    </location>
</feature>
<feature type="region of interest" description="Disordered" evidence="5">
    <location>
        <begin position="145"/>
        <end position="222"/>
    </location>
</feature>
<feature type="region of interest" description="Disordered" evidence="5">
    <location>
        <begin position="234"/>
        <end position="280"/>
    </location>
</feature>
<feature type="region of interest" description="Disordered" evidence="5">
    <location>
        <begin position="386"/>
        <end position="421"/>
    </location>
</feature>
<feature type="short sequence motif" description="NPF 1">
    <location>
        <begin position="310"/>
        <end position="312"/>
    </location>
</feature>
<feature type="short sequence motif" description="NPF 2">
    <location>
        <begin position="326"/>
        <end position="328"/>
    </location>
</feature>
<feature type="compositionally biased region" description="Basic and acidic residues" evidence="5">
    <location>
        <begin position="64"/>
        <end position="73"/>
    </location>
</feature>
<feature type="compositionally biased region" description="Polar residues" evidence="5">
    <location>
        <begin position="145"/>
        <end position="193"/>
    </location>
</feature>
<feature type="compositionally biased region" description="Pro residues" evidence="5">
    <location>
        <begin position="241"/>
        <end position="251"/>
    </location>
</feature>
<feature type="modified residue" description="Phosphothreonine" evidence="7">
    <location>
        <position position="253"/>
    </location>
</feature>
<feature type="modified residue" description="Phosphoserine" evidence="2">
    <location>
        <position position="278"/>
    </location>
</feature>
<feature type="modified residue" description="Phosphoserine" evidence="2">
    <location>
        <position position="299"/>
    </location>
</feature>
<feature type="modified residue" description="Phosphoserine" evidence="7">
    <location>
        <position position="759"/>
    </location>
</feature>
<dbReference type="EMBL" id="AK036612">
    <property type="protein sequence ID" value="BAC29507.1"/>
    <property type="molecule type" value="mRNA"/>
</dbReference>
<dbReference type="EMBL" id="BC132531">
    <property type="protein sequence ID" value="AAI32532.1"/>
    <property type="molecule type" value="mRNA"/>
</dbReference>
<dbReference type="EMBL" id="BC138054">
    <property type="protein sequence ID" value="AAI38055.1"/>
    <property type="molecule type" value="mRNA"/>
</dbReference>
<dbReference type="CCDS" id="CCDS26090.1"/>
<dbReference type="RefSeq" id="NP_001390503.1">
    <property type="nucleotide sequence ID" value="NM_001403574.1"/>
</dbReference>
<dbReference type="RefSeq" id="NP_780576.1">
    <property type="nucleotide sequence ID" value="NM_175367.7"/>
</dbReference>
<dbReference type="RefSeq" id="XP_006515436.1">
    <property type="nucleotide sequence ID" value="XM_006515373.5"/>
</dbReference>
<dbReference type="RefSeq" id="XP_006515437.1">
    <property type="nucleotide sequence ID" value="XM_006515374.3"/>
</dbReference>
<dbReference type="RefSeq" id="XP_011242284.1">
    <property type="nucleotide sequence ID" value="XM_011243982.3"/>
</dbReference>
<dbReference type="SMR" id="Q8BZ60"/>
<dbReference type="BioGRID" id="224423">
    <property type="interactions" value="5"/>
</dbReference>
<dbReference type="FunCoup" id="Q8BZ60">
    <property type="interactions" value="68"/>
</dbReference>
<dbReference type="IntAct" id="Q8BZ60">
    <property type="interactions" value="4"/>
</dbReference>
<dbReference type="STRING" id="10090.ENSMUSP00000053908"/>
<dbReference type="GlyGen" id="Q8BZ60">
    <property type="glycosylation" value="1 site"/>
</dbReference>
<dbReference type="iPTMnet" id="Q8BZ60"/>
<dbReference type="PhosphoSitePlus" id="Q8BZ60"/>
<dbReference type="PaxDb" id="10090-ENSMUSP00000053908"/>
<dbReference type="ProteomicsDB" id="257459"/>
<dbReference type="ABCD" id="Q8BZ60">
    <property type="antibodies" value="1 sequenced antibody"/>
</dbReference>
<dbReference type="Antibodypedia" id="164">
    <property type="antibodies" value="34 antibodies from 15 providers"/>
</dbReference>
<dbReference type="DNASU" id="108800"/>
<dbReference type="Ensembl" id="ENSMUST00000052969.15">
    <property type="protein sequence ID" value="ENSMUSP00000053908.8"/>
    <property type="gene ID" value="ENSMUSG00000020961.16"/>
</dbReference>
<dbReference type="GeneID" id="108800"/>
<dbReference type="KEGG" id="mmu:108800"/>
<dbReference type="UCSC" id="uc007okt.2">
    <property type="organism name" value="mouse"/>
</dbReference>
<dbReference type="AGR" id="MGI:1918272"/>
<dbReference type="CTD" id="85439"/>
<dbReference type="MGI" id="MGI:1918272">
    <property type="gene designation" value="Ston2"/>
</dbReference>
<dbReference type="VEuPathDB" id="HostDB:ENSMUSG00000020961"/>
<dbReference type="eggNOG" id="KOG2677">
    <property type="taxonomic scope" value="Eukaryota"/>
</dbReference>
<dbReference type="GeneTree" id="ENSGT00940000159392"/>
<dbReference type="HOGENOM" id="CLU_016541_0_0_1"/>
<dbReference type="InParanoid" id="Q8BZ60"/>
<dbReference type="OMA" id="EWVSFND"/>
<dbReference type="PhylomeDB" id="Q8BZ60"/>
<dbReference type="TreeFam" id="TF300393"/>
<dbReference type="Reactome" id="R-MMU-8856825">
    <property type="pathway name" value="Cargo recognition for clathrin-mediated endocytosis"/>
</dbReference>
<dbReference type="Reactome" id="R-MMU-8856828">
    <property type="pathway name" value="Clathrin-mediated endocytosis"/>
</dbReference>
<dbReference type="BioGRID-ORCS" id="108800">
    <property type="hits" value="1 hit in 76 CRISPR screens"/>
</dbReference>
<dbReference type="ChiTaRS" id="Ston2">
    <property type="organism name" value="mouse"/>
</dbReference>
<dbReference type="PRO" id="PR:Q8BZ60"/>
<dbReference type="Proteomes" id="UP000000589">
    <property type="component" value="Chromosome 12"/>
</dbReference>
<dbReference type="RNAct" id="Q8BZ60">
    <property type="molecule type" value="protein"/>
</dbReference>
<dbReference type="Bgee" id="ENSMUSG00000020961">
    <property type="expression patterns" value="Expressed in animal zygote and 161 other cell types or tissues"/>
</dbReference>
<dbReference type="ExpressionAtlas" id="Q8BZ60">
    <property type="expression patterns" value="baseline and differential"/>
</dbReference>
<dbReference type="GO" id="GO:0030136">
    <property type="term" value="C:clathrin-coated vesicle"/>
    <property type="evidence" value="ECO:0000314"/>
    <property type="project" value="MGI"/>
</dbReference>
<dbReference type="GO" id="GO:0005829">
    <property type="term" value="C:cytosol"/>
    <property type="evidence" value="ECO:0007669"/>
    <property type="project" value="Ensembl"/>
</dbReference>
<dbReference type="GO" id="GO:0016020">
    <property type="term" value="C:membrane"/>
    <property type="evidence" value="ECO:0007669"/>
    <property type="project" value="UniProtKB-SubCell"/>
</dbReference>
<dbReference type="GO" id="GO:0043005">
    <property type="term" value="C:neuron projection"/>
    <property type="evidence" value="ECO:0007669"/>
    <property type="project" value="UniProtKB-KW"/>
</dbReference>
<dbReference type="GO" id="GO:0005730">
    <property type="term" value="C:nucleolus"/>
    <property type="evidence" value="ECO:0007669"/>
    <property type="project" value="Ensembl"/>
</dbReference>
<dbReference type="GO" id="GO:0008021">
    <property type="term" value="C:synaptic vesicle"/>
    <property type="evidence" value="ECO:0000314"/>
    <property type="project" value="MGI"/>
</dbReference>
<dbReference type="GO" id="GO:0007268">
    <property type="term" value="P:chemical synaptic transmission"/>
    <property type="evidence" value="ECO:0000305"/>
    <property type="project" value="MGI"/>
</dbReference>
<dbReference type="GO" id="GO:0002244">
    <property type="term" value="P:hematopoietic progenitor cell differentiation"/>
    <property type="evidence" value="ECO:0000315"/>
    <property type="project" value="MGI"/>
</dbReference>
<dbReference type="GO" id="GO:0030100">
    <property type="term" value="P:regulation of endocytosis"/>
    <property type="evidence" value="ECO:0000314"/>
    <property type="project" value="UniProtKB"/>
</dbReference>
<dbReference type="GO" id="GO:0048488">
    <property type="term" value="P:synaptic vesicle endocytosis"/>
    <property type="evidence" value="ECO:0000250"/>
    <property type="project" value="UniProtKB"/>
</dbReference>
<dbReference type="CDD" id="cd09263">
    <property type="entry name" value="AP_stonin-2_MHD"/>
    <property type="match status" value="1"/>
</dbReference>
<dbReference type="FunFam" id="2.60.40.1170:FF:000012">
    <property type="entry name" value="Stonin 2"/>
    <property type="match status" value="1"/>
</dbReference>
<dbReference type="FunFam" id="2.60.40.1170:FF:000036">
    <property type="entry name" value="stonin-2 isoform X1"/>
    <property type="match status" value="1"/>
</dbReference>
<dbReference type="FunFam" id="2.60.40.1170:FF:000018">
    <property type="entry name" value="stonin-2 isoform X2"/>
    <property type="match status" value="1"/>
</dbReference>
<dbReference type="Gene3D" id="2.60.40.1170">
    <property type="entry name" value="Mu homology domain, subdomain B"/>
    <property type="match status" value="2"/>
</dbReference>
<dbReference type="InterPro" id="IPR050431">
    <property type="entry name" value="Adaptor_comp_med_subunit"/>
</dbReference>
<dbReference type="InterPro" id="IPR036168">
    <property type="entry name" value="AP2_Mu_C_sf"/>
</dbReference>
<dbReference type="InterPro" id="IPR028565">
    <property type="entry name" value="MHD"/>
</dbReference>
<dbReference type="InterPro" id="IPR012320">
    <property type="entry name" value="SHD_dom"/>
</dbReference>
<dbReference type="InterPro" id="IPR031228">
    <property type="entry name" value="STON2_MHD"/>
</dbReference>
<dbReference type="InterPro" id="IPR017110">
    <property type="entry name" value="Stonin"/>
</dbReference>
<dbReference type="InterPro" id="IPR022699">
    <property type="entry name" value="Stonin2_N"/>
</dbReference>
<dbReference type="PANTHER" id="PTHR10529">
    <property type="entry name" value="AP COMPLEX SUBUNIT MU"/>
    <property type="match status" value="1"/>
</dbReference>
<dbReference type="Pfam" id="PF00928">
    <property type="entry name" value="Adap_comp_sub"/>
    <property type="match status" value="1"/>
</dbReference>
<dbReference type="Pfam" id="PF12016">
    <property type="entry name" value="Stonin2_N"/>
    <property type="match status" value="1"/>
</dbReference>
<dbReference type="PIRSF" id="PIRSF037099">
    <property type="entry name" value="Stonin"/>
    <property type="match status" value="1"/>
</dbReference>
<dbReference type="SUPFAM" id="SSF49447">
    <property type="entry name" value="Second domain of Mu2 adaptin subunit (ap50) of ap2 adaptor"/>
    <property type="match status" value="1"/>
</dbReference>
<dbReference type="PROSITE" id="PS51072">
    <property type="entry name" value="MHD"/>
    <property type="match status" value="1"/>
</dbReference>
<dbReference type="PROSITE" id="PS51070">
    <property type="entry name" value="SHD"/>
    <property type="match status" value="1"/>
</dbReference>
<comment type="function">
    <text evidence="1">Adapter protein involved in endocytic machinery. Involved in the synaptic vesicle recycling. May facilitate clathrin-coated vesicle uncoating (By similarity).</text>
</comment>
<comment type="subunit">
    <text evidence="1">Interacts with the second C2 domain of synaptotagmins SYT1 and SYT2. Interacts with EPS15, EPS15R and ITSN1. Interacts indirectly with the AP-2 adapter complex. Interacts with TOR1A and COPS4; the interaction controls STON2 protein stability (By similarity).</text>
</comment>
<comment type="subcellular location">
    <subcellularLocation>
        <location evidence="1">Cytoplasm</location>
    </subcellularLocation>
    <subcellularLocation>
        <location evidence="1">Membrane</location>
    </subcellularLocation>
    <subcellularLocation>
        <location evidence="1">Synapse</location>
        <location evidence="1">Synaptosome</location>
    </subcellularLocation>
    <text>Some fraction is membrane-associated.</text>
</comment>
<comment type="domain">
    <text evidence="1">The Asn-Pro-Phe (NPF) motifs, which are found in proteins involved in the endocytic pathway, mediate the interaction with the EH domain of SYT1, SYT2, EPS15, EPS15R and ITSN1.</text>
</comment>
<comment type="PTM">
    <text evidence="1">Phosphorylated in vitro by PKD.</text>
</comment>
<comment type="PTM">
    <text evidence="1">Neddylated; deneddylated via its interaction with the COP9 signalosome (CSN) complex through TOR1A and COPS4.</text>
</comment>
<comment type="PTM">
    <text evidence="1">Ubiquitinated; leading to its degradation.</text>
</comment>
<comment type="similarity">
    <text evidence="6">Belongs to the Stoned B family.</text>
</comment>
<organism>
    <name type="scientific">Mus musculus</name>
    <name type="common">Mouse</name>
    <dbReference type="NCBI Taxonomy" id="10090"/>
    <lineage>
        <taxon>Eukaryota</taxon>
        <taxon>Metazoa</taxon>
        <taxon>Chordata</taxon>
        <taxon>Craniata</taxon>
        <taxon>Vertebrata</taxon>
        <taxon>Euteleostomi</taxon>
        <taxon>Mammalia</taxon>
        <taxon>Eutheria</taxon>
        <taxon>Euarchontoglires</taxon>
        <taxon>Glires</taxon>
        <taxon>Rodentia</taxon>
        <taxon>Myomorpha</taxon>
        <taxon>Muroidea</taxon>
        <taxon>Muridae</taxon>
        <taxon>Murinae</taxon>
        <taxon>Mus</taxon>
        <taxon>Mus</taxon>
    </lineage>
</organism>
<evidence type="ECO:0000250" key="1"/>
<evidence type="ECO:0000250" key="2">
    <source>
        <dbReference type="UniProtKB" id="Q8WXE9"/>
    </source>
</evidence>
<evidence type="ECO:0000255" key="3">
    <source>
        <dbReference type="PROSITE-ProRule" id="PRU00403"/>
    </source>
</evidence>
<evidence type="ECO:0000255" key="4">
    <source>
        <dbReference type="PROSITE-ProRule" id="PRU00404"/>
    </source>
</evidence>
<evidence type="ECO:0000256" key="5">
    <source>
        <dbReference type="SAM" id="MobiDB-lite"/>
    </source>
</evidence>
<evidence type="ECO:0000305" key="6"/>
<evidence type="ECO:0007744" key="7">
    <source>
    </source>
</evidence>
<keyword id="KW-0963">Cytoplasm</keyword>
<keyword id="KW-0254">Endocytosis</keyword>
<keyword id="KW-0472">Membrane</keyword>
<keyword id="KW-0597">Phosphoprotein</keyword>
<keyword id="KW-1185">Reference proteome</keyword>
<keyword id="KW-0677">Repeat</keyword>
<keyword id="KW-0770">Synapse</keyword>
<keyword id="KW-0771">Synaptosome</keyword>
<keyword id="KW-0832">Ubl conjugation</keyword>
<sequence>MTTLDHVIATHQSEWVSFSEEPLFPTPLEGGTEEHFPGLSSSSERSESSSGENHVVDEGSQDLSHSEQDDSSEKMGLISEAASPPGSPVQPTPDLASAISNWVQFEDDTPWSSTSPPHKETALTLTMPCWTCPSFDSLRRCPLTSESSWTTHSEDTSSPSVAPSYTDLQLINTEEQASGRASGTDSTDNSSSLQEDEEVEMEAISWWAGSPAMNGHPAAPPVTTARFPSWVTFEDNEVGCPSPPVPSPKKPNTPSAATAAPDVPFNSTGSFKRDRPKSTLMNLPKVQKLDISSLNRPPSVIEAPPWRATNPFLNETLQDVQPSPINPFSAFFEEQERRSQNSSVSSTTGKSQRDSLIVVYQDAISFDDSGKSQPHPDAIEKLKQLQIDDPDPVGNTALPDDDPTASVELDAPSPASALSQPRDGWPMMLRIPEKKNIMSSRHWGPIYIKLTASGYLQLYYEQGLEKPFREFKLEICHEVSEPRLQNYDENGRIHSLRIDRVTYKEKKKYQPKPAVAHAAEREQVIKLGTTNYDDFRSFIHAVQDRLMDLPVLSMDLSTVGLNYLEEEITVDVRDEFSGTVGKGDNQILQHHVLTRIHILSFLSGLAECRLGLNDILIKGNEIVSRQDIMPTTTTKWIKLHECRFHGCVDEDVFNSSRVILFNPLDACRFELMRFRTVFAEKTLPFTLRTAASINGAEVEVQSWLRMSPGFSSNRDPLTQVPCENVMVRYPVPSEWVKNFRRDSVLGEKSLKAKVNRGASFGSAGASGSEPVMRVTLGTAKYEHAFNSIVWRINRLPDKNSASGHPHCFFCHLELGSDREVPSRFANYVNVEFSMPTTSASKAAVRSVSVEDKPDVRKWVNYSAHYSYKVEIEQKKSLKPDFEGEDLENPKECGVQ</sequence>
<proteinExistence type="evidence at protein level"/>